<feature type="chain" id="PRO_0000110811" description="Transcriptional regulator GfcR">
    <location>
        <begin position="1"/>
        <end position="204"/>
    </location>
</feature>
<name>GFCR_METMA</name>
<sequence>MKNIEDLIQKAVELQNNGLGTGQIADELNVSRETVTWLLTRSKKEVAAPAPKDISVNWSSIGKSATRLHYISLALCDMVIETLEKTNTEVDVVVGVAASGIPLASMMANELGADFALYHSRKGQDMVQPGQKGTISRNFGSVAGKNCVIVDDVITTGSTTMEVIEQLREMDAKPRAVVVLVDKKGADTIANVPIQSLVRIVRVD</sequence>
<comment type="domain">
    <text evidence="1">Contains an N-terminal DNA-binding winged helix-turn-helix domain and a C-terminal regulatory domain (or effector binding domain) resembling phosphoribosyltransferase (PRT) domain.</text>
</comment>
<comment type="similarity">
    <text evidence="1">Belongs to the purine/pyrimidine phosphoribosyltransferase family. GfcR subfamily.</text>
</comment>
<protein>
    <recommendedName>
        <fullName evidence="1">Transcriptional regulator GfcR</fullName>
    </recommendedName>
</protein>
<reference key="1">
    <citation type="journal article" date="2002" name="J. Mol. Microbiol. Biotechnol.">
        <title>The genome of Methanosarcina mazei: evidence for lateral gene transfer between Bacteria and Archaea.</title>
        <authorList>
            <person name="Deppenmeier U."/>
            <person name="Johann A."/>
            <person name="Hartsch T."/>
            <person name="Merkl R."/>
            <person name="Schmitz R.A."/>
            <person name="Martinez-Arias R."/>
            <person name="Henne A."/>
            <person name="Wiezer A."/>
            <person name="Baeumer S."/>
            <person name="Jacobi C."/>
            <person name="Brueggemann H."/>
            <person name="Lienard T."/>
            <person name="Christmann A."/>
            <person name="Boemecke M."/>
            <person name="Steckel S."/>
            <person name="Bhattacharyya A."/>
            <person name="Lykidis A."/>
            <person name="Overbeek R."/>
            <person name="Klenk H.-P."/>
            <person name="Gunsalus R.P."/>
            <person name="Fritz H.-J."/>
            <person name="Gottschalk G."/>
        </authorList>
    </citation>
    <scope>NUCLEOTIDE SEQUENCE [LARGE SCALE GENOMIC DNA]</scope>
    <source>
        <strain>ATCC BAA-159 / DSM 3647 / Goe1 / Go1 / JCM 11833 / OCM 88</strain>
    </source>
</reference>
<keyword id="KW-0238">DNA-binding</keyword>
<keyword id="KW-0804">Transcription</keyword>
<keyword id="KW-0805">Transcription regulation</keyword>
<organism>
    <name type="scientific">Methanosarcina mazei (strain ATCC BAA-159 / DSM 3647 / Goe1 / Go1 / JCM 11833 / OCM 88)</name>
    <name type="common">Methanosarcina frisia</name>
    <dbReference type="NCBI Taxonomy" id="192952"/>
    <lineage>
        <taxon>Archaea</taxon>
        <taxon>Methanobacteriati</taxon>
        <taxon>Methanobacteriota</taxon>
        <taxon>Stenosarchaea group</taxon>
        <taxon>Methanomicrobia</taxon>
        <taxon>Methanosarcinales</taxon>
        <taxon>Methanosarcinaceae</taxon>
        <taxon>Methanosarcina</taxon>
    </lineage>
</organism>
<dbReference type="EMBL" id="AE008384">
    <property type="protein sequence ID" value="AAM31731.1"/>
    <property type="molecule type" value="Genomic_DNA"/>
</dbReference>
<dbReference type="RefSeq" id="WP_011033967.1">
    <property type="nucleotide sequence ID" value="NC_003901.1"/>
</dbReference>
<dbReference type="SMR" id="Q8PVD0"/>
<dbReference type="KEGG" id="mma:MM_2035"/>
<dbReference type="PATRIC" id="fig|192952.21.peg.2336"/>
<dbReference type="eggNOG" id="arCOG00028">
    <property type="taxonomic scope" value="Archaea"/>
</dbReference>
<dbReference type="HOGENOM" id="CLU_111001_0_0_2"/>
<dbReference type="Proteomes" id="UP000000595">
    <property type="component" value="Chromosome"/>
</dbReference>
<dbReference type="GO" id="GO:0003677">
    <property type="term" value="F:DNA binding"/>
    <property type="evidence" value="ECO:0007669"/>
    <property type="project" value="UniProtKB-UniRule"/>
</dbReference>
<dbReference type="GO" id="GO:0004588">
    <property type="term" value="F:orotate phosphoribosyltransferase activity"/>
    <property type="evidence" value="ECO:0007669"/>
    <property type="project" value="TreeGrafter"/>
</dbReference>
<dbReference type="GO" id="GO:0019856">
    <property type="term" value="P:pyrimidine nucleobase biosynthetic process"/>
    <property type="evidence" value="ECO:0007669"/>
    <property type="project" value="TreeGrafter"/>
</dbReference>
<dbReference type="GO" id="GO:0010468">
    <property type="term" value="P:regulation of gene expression"/>
    <property type="evidence" value="ECO:0007669"/>
    <property type="project" value="UniProtKB-UniRule"/>
</dbReference>
<dbReference type="GO" id="GO:0006222">
    <property type="term" value="P:UMP biosynthetic process"/>
    <property type="evidence" value="ECO:0007669"/>
    <property type="project" value="TreeGrafter"/>
</dbReference>
<dbReference type="CDD" id="cd06223">
    <property type="entry name" value="PRTases_typeI"/>
    <property type="match status" value="1"/>
</dbReference>
<dbReference type="Gene3D" id="3.40.50.2020">
    <property type="match status" value="1"/>
</dbReference>
<dbReference type="Gene3D" id="1.10.10.60">
    <property type="entry name" value="Homeodomain-like"/>
    <property type="match status" value="1"/>
</dbReference>
<dbReference type="HAMAP" id="MF_01214">
    <property type="entry name" value="GfcR"/>
    <property type="match status" value="1"/>
</dbReference>
<dbReference type="InterPro" id="IPR022854">
    <property type="entry name" value="GfcR-like"/>
</dbReference>
<dbReference type="InterPro" id="IPR000836">
    <property type="entry name" value="PRibTrfase_dom"/>
</dbReference>
<dbReference type="InterPro" id="IPR029057">
    <property type="entry name" value="PRTase-like"/>
</dbReference>
<dbReference type="NCBIfam" id="NF002620">
    <property type="entry name" value="PRK02277.1"/>
    <property type="match status" value="1"/>
</dbReference>
<dbReference type="PANTHER" id="PTHR19278">
    <property type="entry name" value="OROTATE PHOSPHORIBOSYLTRANSFERASE"/>
    <property type="match status" value="1"/>
</dbReference>
<dbReference type="PANTHER" id="PTHR19278:SF41">
    <property type="entry name" value="PYRE-LIKE PROTEIN"/>
    <property type="match status" value="1"/>
</dbReference>
<dbReference type="Pfam" id="PF00156">
    <property type="entry name" value="Pribosyltran"/>
    <property type="match status" value="1"/>
</dbReference>
<dbReference type="SUPFAM" id="SSF53271">
    <property type="entry name" value="PRTase-like"/>
    <property type="match status" value="1"/>
</dbReference>
<dbReference type="PROSITE" id="PS00103">
    <property type="entry name" value="PUR_PYR_PR_TRANSFER"/>
    <property type="match status" value="1"/>
</dbReference>
<gene>
    <name evidence="1" type="primary">gfcR</name>
    <name type="ordered locus">MM_2035</name>
</gene>
<proteinExistence type="inferred from homology"/>
<evidence type="ECO:0000255" key="1">
    <source>
        <dbReference type="HAMAP-Rule" id="MF_01214"/>
    </source>
</evidence>
<accession>Q8PVD0</accession>